<reference key="1">
    <citation type="journal article" date="1999" name="Science">
        <title>Genome sequence of the radioresistant bacterium Deinococcus radiodurans R1.</title>
        <authorList>
            <person name="White O."/>
            <person name="Eisen J.A."/>
            <person name="Heidelberg J.F."/>
            <person name="Hickey E.K."/>
            <person name="Peterson J.D."/>
            <person name="Dodson R.J."/>
            <person name="Haft D.H."/>
            <person name="Gwinn M.L."/>
            <person name="Nelson W.C."/>
            <person name="Richardson D.L."/>
            <person name="Moffat K.S."/>
            <person name="Qin H."/>
            <person name="Jiang L."/>
            <person name="Pamphile W."/>
            <person name="Crosby M."/>
            <person name="Shen M."/>
            <person name="Vamathevan J.J."/>
            <person name="Lam P."/>
            <person name="McDonald L.A."/>
            <person name="Utterback T.R."/>
            <person name="Zalewski C."/>
            <person name="Makarova K.S."/>
            <person name="Aravind L."/>
            <person name="Daly M.J."/>
            <person name="Minton K.W."/>
            <person name="Fleischmann R.D."/>
            <person name="Ketchum K.A."/>
            <person name="Nelson K.E."/>
            <person name="Salzberg S.L."/>
            <person name="Smith H.O."/>
            <person name="Venter J.C."/>
            <person name="Fraser C.M."/>
        </authorList>
    </citation>
    <scope>NUCLEOTIDE SEQUENCE [LARGE SCALE GENOMIC DNA]</scope>
    <source>
        <strain>ATCC 13939 / DSM 20539 / JCM 16871 / CCUG 27074 / LMG 4051 / NBRC 15346 / NCIMB 9279 / VKM B-1422 / R1</strain>
    </source>
</reference>
<protein>
    <recommendedName>
        <fullName evidence="1">Leucyl/phenylalanyl-tRNA--protein transferase</fullName>
        <ecNumber evidence="1">2.3.2.6</ecNumber>
    </recommendedName>
    <alternativeName>
        <fullName evidence="1">L/F-transferase</fullName>
    </alternativeName>
    <alternativeName>
        <fullName evidence="1">Leucyltransferase</fullName>
    </alternativeName>
    <alternativeName>
        <fullName evidence="1">Phenyalanyltransferase</fullName>
    </alternativeName>
</protein>
<sequence>MLAHMPAARTFLQHPDPLTREIAEGYAGGSFLMDNGDGLRWYGVPGRALVPLTEDAGLHVARRMRRELKHFRPSVDLAFDEVIAGCRGHLPGSPERDGEWISDELVEIYQHLHTTGLAHSFEVWQGDELAGGVLGLALGGAFIAESKFHRLTNGSKAALIHLAEHLDRQGFALLDAQIQNPHLATLGVYEVTDKEYRRLLRRALALDVEL</sequence>
<organism>
    <name type="scientific">Deinococcus radiodurans (strain ATCC 13939 / DSM 20539 / JCM 16871 / CCUG 27074 / LMG 4051 / NBRC 15346 / NCIMB 9279 / VKM B-1422 / R1)</name>
    <dbReference type="NCBI Taxonomy" id="243230"/>
    <lineage>
        <taxon>Bacteria</taxon>
        <taxon>Thermotogati</taxon>
        <taxon>Deinococcota</taxon>
        <taxon>Deinococci</taxon>
        <taxon>Deinococcales</taxon>
        <taxon>Deinococcaceae</taxon>
        <taxon>Deinococcus</taxon>
    </lineage>
</organism>
<proteinExistence type="inferred from homology"/>
<evidence type="ECO:0000255" key="1">
    <source>
        <dbReference type="HAMAP-Rule" id="MF_00688"/>
    </source>
</evidence>
<comment type="function">
    <text evidence="1">Functions in the N-end rule pathway of protein degradation where it conjugates Leu, Phe and, less efficiently, Met from aminoacyl-tRNAs to the N-termini of proteins containing an N-terminal arginine or lysine.</text>
</comment>
<comment type="catalytic activity">
    <reaction evidence="1">
        <text>N-terminal L-lysyl-[protein] + L-leucyl-tRNA(Leu) = N-terminal L-leucyl-L-lysyl-[protein] + tRNA(Leu) + H(+)</text>
        <dbReference type="Rhea" id="RHEA:12340"/>
        <dbReference type="Rhea" id="RHEA-COMP:9613"/>
        <dbReference type="Rhea" id="RHEA-COMP:9622"/>
        <dbReference type="Rhea" id="RHEA-COMP:12670"/>
        <dbReference type="Rhea" id="RHEA-COMP:12671"/>
        <dbReference type="ChEBI" id="CHEBI:15378"/>
        <dbReference type="ChEBI" id="CHEBI:65249"/>
        <dbReference type="ChEBI" id="CHEBI:78442"/>
        <dbReference type="ChEBI" id="CHEBI:78494"/>
        <dbReference type="ChEBI" id="CHEBI:133043"/>
        <dbReference type="EC" id="2.3.2.6"/>
    </reaction>
</comment>
<comment type="catalytic activity">
    <reaction evidence="1">
        <text>N-terminal L-arginyl-[protein] + L-leucyl-tRNA(Leu) = N-terminal L-leucyl-L-arginyl-[protein] + tRNA(Leu) + H(+)</text>
        <dbReference type="Rhea" id="RHEA:50416"/>
        <dbReference type="Rhea" id="RHEA-COMP:9613"/>
        <dbReference type="Rhea" id="RHEA-COMP:9622"/>
        <dbReference type="Rhea" id="RHEA-COMP:12672"/>
        <dbReference type="Rhea" id="RHEA-COMP:12673"/>
        <dbReference type="ChEBI" id="CHEBI:15378"/>
        <dbReference type="ChEBI" id="CHEBI:64719"/>
        <dbReference type="ChEBI" id="CHEBI:78442"/>
        <dbReference type="ChEBI" id="CHEBI:78494"/>
        <dbReference type="ChEBI" id="CHEBI:133044"/>
        <dbReference type="EC" id="2.3.2.6"/>
    </reaction>
</comment>
<comment type="catalytic activity">
    <reaction evidence="1">
        <text>L-phenylalanyl-tRNA(Phe) + an N-terminal L-alpha-aminoacyl-[protein] = an N-terminal L-phenylalanyl-L-alpha-aminoacyl-[protein] + tRNA(Phe)</text>
        <dbReference type="Rhea" id="RHEA:43632"/>
        <dbReference type="Rhea" id="RHEA-COMP:9668"/>
        <dbReference type="Rhea" id="RHEA-COMP:9699"/>
        <dbReference type="Rhea" id="RHEA-COMP:10636"/>
        <dbReference type="Rhea" id="RHEA-COMP:10637"/>
        <dbReference type="ChEBI" id="CHEBI:78442"/>
        <dbReference type="ChEBI" id="CHEBI:78531"/>
        <dbReference type="ChEBI" id="CHEBI:78597"/>
        <dbReference type="ChEBI" id="CHEBI:83561"/>
        <dbReference type="EC" id="2.3.2.6"/>
    </reaction>
</comment>
<comment type="subcellular location">
    <subcellularLocation>
        <location evidence="1">Cytoplasm</location>
    </subcellularLocation>
</comment>
<comment type="similarity">
    <text evidence="1">Belongs to the L/F-transferase family.</text>
</comment>
<feature type="chain" id="PRO_0000207214" description="Leucyl/phenylalanyl-tRNA--protein transferase">
    <location>
        <begin position="1"/>
        <end position="210"/>
    </location>
</feature>
<accession>Q9RTP4</accession>
<keyword id="KW-0012">Acyltransferase</keyword>
<keyword id="KW-0963">Cytoplasm</keyword>
<keyword id="KW-1185">Reference proteome</keyword>
<keyword id="KW-0808">Transferase</keyword>
<name>LFTR_DEIRA</name>
<gene>
    <name evidence="1" type="primary">aat</name>
    <name type="ordered locus">DR_1713</name>
</gene>
<dbReference type="EC" id="2.3.2.6" evidence="1"/>
<dbReference type="EMBL" id="AE000513">
    <property type="protein sequence ID" value="AAF11271.1"/>
    <property type="molecule type" value="Genomic_DNA"/>
</dbReference>
<dbReference type="PIR" id="H75361">
    <property type="entry name" value="H75361"/>
</dbReference>
<dbReference type="RefSeq" id="NP_295436.1">
    <property type="nucleotide sequence ID" value="NC_001263.1"/>
</dbReference>
<dbReference type="SMR" id="Q9RTP4"/>
<dbReference type="STRING" id="243230.DR_1713"/>
<dbReference type="PaxDb" id="243230-DR_1713"/>
<dbReference type="EnsemblBacteria" id="AAF11271">
    <property type="protein sequence ID" value="AAF11271"/>
    <property type="gene ID" value="DR_1713"/>
</dbReference>
<dbReference type="KEGG" id="dra:DR_1713"/>
<dbReference type="PATRIC" id="fig|243230.17.peg.1924"/>
<dbReference type="eggNOG" id="COG2360">
    <property type="taxonomic scope" value="Bacteria"/>
</dbReference>
<dbReference type="HOGENOM" id="CLU_075045_1_1_0"/>
<dbReference type="InParanoid" id="Q9RTP4"/>
<dbReference type="OrthoDB" id="9790282at2"/>
<dbReference type="Proteomes" id="UP000002524">
    <property type="component" value="Chromosome 1"/>
</dbReference>
<dbReference type="GO" id="GO:0005737">
    <property type="term" value="C:cytoplasm"/>
    <property type="evidence" value="ECO:0000318"/>
    <property type="project" value="GO_Central"/>
</dbReference>
<dbReference type="GO" id="GO:0008914">
    <property type="term" value="F:leucyl-tRNA--protein transferase activity"/>
    <property type="evidence" value="ECO:0000318"/>
    <property type="project" value="GO_Central"/>
</dbReference>
<dbReference type="GO" id="GO:0030163">
    <property type="term" value="P:protein catabolic process"/>
    <property type="evidence" value="ECO:0007669"/>
    <property type="project" value="UniProtKB-UniRule"/>
</dbReference>
<dbReference type="Gene3D" id="3.40.630.70">
    <property type="entry name" value="Leucyl/phenylalanyl-tRNA-protein transferase, C-terminal domain"/>
    <property type="match status" value="1"/>
</dbReference>
<dbReference type="HAMAP" id="MF_00688">
    <property type="entry name" value="Leu_Phe_trans"/>
    <property type="match status" value="1"/>
</dbReference>
<dbReference type="InterPro" id="IPR016181">
    <property type="entry name" value="Acyl_CoA_acyltransferase"/>
</dbReference>
<dbReference type="InterPro" id="IPR004616">
    <property type="entry name" value="Leu/Phe-tRNA_Trfase"/>
</dbReference>
<dbReference type="InterPro" id="IPR042203">
    <property type="entry name" value="Leu/Phe-tRNA_Trfase_C"/>
</dbReference>
<dbReference type="NCBIfam" id="TIGR00667">
    <property type="entry name" value="aat"/>
    <property type="match status" value="1"/>
</dbReference>
<dbReference type="PANTHER" id="PTHR30098">
    <property type="entry name" value="LEUCYL/PHENYLALANYL-TRNA--PROTEIN TRANSFERASE"/>
    <property type="match status" value="1"/>
</dbReference>
<dbReference type="PANTHER" id="PTHR30098:SF2">
    <property type="entry name" value="LEUCYL_PHENYLALANYL-TRNA--PROTEIN TRANSFERASE"/>
    <property type="match status" value="1"/>
</dbReference>
<dbReference type="Pfam" id="PF03588">
    <property type="entry name" value="Leu_Phe_trans"/>
    <property type="match status" value="1"/>
</dbReference>
<dbReference type="SUPFAM" id="SSF55729">
    <property type="entry name" value="Acyl-CoA N-acyltransferases (Nat)"/>
    <property type="match status" value="1"/>
</dbReference>